<comment type="function">
    <text evidence="1">One of the primary rRNA binding proteins, it binds specifically to the 5'-end of 16S ribosomal RNA.</text>
</comment>
<comment type="subunit">
    <text evidence="1">Part of the 30S ribosomal subunit.</text>
</comment>
<comment type="similarity">
    <text evidence="1">Belongs to the universal ribosomal protein uS17 family.</text>
</comment>
<dbReference type="EMBL" id="CP000802">
    <property type="protein sequence ID" value="ABV07720.1"/>
    <property type="molecule type" value="Genomic_DNA"/>
</dbReference>
<dbReference type="RefSeq" id="WP_000130100.1">
    <property type="nucleotide sequence ID" value="NC_009800.1"/>
</dbReference>
<dbReference type="SMR" id="A8A5B6"/>
<dbReference type="GeneID" id="93778676"/>
<dbReference type="KEGG" id="ecx:EcHS_A3505"/>
<dbReference type="HOGENOM" id="CLU_073626_1_1_6"/>
<dbReference type="GO" id="GO:0022627">
    <property type="term" value="C:cytosolic small ribosomal subunit"/>
    <property type="evidence" value="ECO:0007669"/>
    <property type="project" value="TreeGrafter"/>
</dbReference>
<dbReference type="GO" id="GO:0019843">
    <property type="term" value="F:rRNA binding"/>
    <property type="evidence" value="ECO:0007669"/>
    <property type="project" value="UniProtKB-UniRule"/>
</dbReference>
<dbReference type="GO" id="GO:0003735">
    <property type="term" value="F:structural constituent of ribosome"/>
    <property type="evidence" value="ECO:0007669"/>
    <property type="project" value="InterPro"/>
</dbReference>
<dbReference type="GO" id="GO:0006412">
    <property type="term" value="P:translation"/>
    <property type="evidence" value="ECO:0007669"/>
    <property type="project" value="UniProtKB-UniRule"/>
</dbReference>
<dbReference type="CDD" id="cd00364">
    <property type="entry name" value="Ribosomal_uS17"/>
    <property type="match status" value="1"/>
</dbReference>
<dbReference type="FunFam" id="2.40.50.140:FF:000014">
    <property type="entry name" value="30S ribosomal protein S17"/>
    <property type="match status" value="1"/>
</dbReference>
<dbReference type="Gene3D" id="2.40.50.140">
    <property type="entry name" value="Nucleic acid-binding proteins"/>
    <property type="match status" value="1"/>
</dbReference>
<dbReference type="HAMAP" id="MF_01345_B">
    <property type="entry name" value="Ribosomal_uS17_B"/>
    <property type="match status" value="1"/>
</dbReference>
<dbReference type="InterPro" id="IPR012340">
    <property type="entry name" value="NA-bd_OB-fold"/>
</dbReference>
<dbReference type="InterPro" id="IPR000266">
    <property type="entry name" value="Ribosomal_uS17"/>
</dbReference>
<dbReference type="InterPro" id="IPR019984">
    <property type="entry name" value="Ribosomal_uS17_bact/chlr"/>
</dbReference>
<dbReference type="InterPro" id="IPR019979">
    <property type="entry name" value="Ribosomal_uS17_CS"/>
</dbReference>
<dbReference type="NCBIfam" id="NF004123">
    <property type="entry name" value="PRK05610.1"/>
    <property type="match status" value="1"/>
</dbReference>
<dbReference type="NCBIfam" id="TIGR03635">
    <property type="entry name" value="uS17_bact"/>
    <property type="match status" value="1"/>
</dbReference>
<dbReference type="PANTHER" id="PTHR10744">
    <property type="entry name" value="40S RIBOSOMAL PROTEIN S11 FAMILY MEMBER"/>
    <property type="match status" value="1"/>
</dbReference>
<dbReference type="PANTHER" id="PTHR10744:SF1">
    <property type="entry name" value="SMALL RIBOSOMAL SUBUNIT PROTEIN US17M"/>
    <property type="match status" value="1"/>
</dbReference>
<dbReference type="Pfam" id="PF00366">
    <property type="entry name" value="Ribosomal_S17"/>
    <property type="match status" value="1"/>
</dbReference>
<dbReference type="PRINTS" id="PR00973">
    <property type="entry name" value="RIBOSOMALS17"/>
</dbReference>
<dbReference type="SUPFAM" id="SSF50249">
    <property type="entry name" value="Nucleic acid-binding proteins"/>
    <property type="match status" value="1"/>
</dbReference>
<dbReference type="PROSITE" id="PS00056">
    <property type="entry name" value="RIBOSOMAL_S17"/>
    <property type="match status" value="1"/>
</dbReference>
<gene>
    <name evidence="1" type="primary">rpsQ</name>
    <name type="ordered locus">EcHS_A3505</name>
</gene>
<organism>
    <name type="scientific">Escherichia coli O9:H4 (strain HS)</name>
    <dbReference type="NCBI Taxonomy" id="331112"/>
    <lineage>
        <taxon>Bacteria</taxon>
        <taxon>Pseudomonadati</taxon>
        <taxon>Pseudomonadota</taxon>
        <taxon>Gammaproteobacteria</taxon>
        <taxon>Enterobacterales</taxon>
        <taxon>Enterobacteriaceae</taxon>
        <taxon>Escherichia</taxon>
    </lineage>
</organism>
<protein>
    <recommendedName>
        <fullName evidence="1">Small ribosomal subunit protein uS17</fullName>
    </recommendedName>
    <alternativeName>
        <fullName evidence="2">30S ribosomal protein S17</fullName>
    </alternativeName>
</protein>
<proteinExistence type="inferred from homology"/>
<sequence>MTDKIRTLQGRVVSDKMEKSIVVAIERFVKHPIYGKFIKRTTKLHVHDENNECGIGDVVEIRECRPLSKTKSWTLVRVVEKAVL</sequence>
<name>RS17_ECOHS</name>
<keyword id="KW-0687">Ribonucleoprotein</keyword>
<keyword id="KW-0689">Ribosomal protein</keyword>
<keyword id="KW-0694">RNA-binding</keyword>
<keyword id="KW-0699">rRNA-binding</keyword>
<reference key="1">
    <citation type="journal article" date="2008" name="J. Bacteriol.">
        <title>The pangenome structure of Escherichia coli: comparative genomic analysis of E. coli commensal and pathogenic isolates.</title>
        <authorList>
            <person name="Rasko D.A."/>
            <person name="Rosovitz M.J."/>
            <person name="Myers G.S.A."/>
            <person name="Mongodin E.F."/>
            <person name="Fricke W.F."/>
            <person name="Gajer P."/>
            <person name="Crabtree J."/>
            <person name="Sebaihia M."/>
            <person name="Thomson N.R."/>
            <person name="Chaudhuri R."/>
            <person name="Henderson I.R."/>
            <person name="Sperandio V."/>
            <person name="Ravel J."/>
        </authorList>
    </citation>
    <scope>NUCLEOTIDE SEQUENCE [LARGE SCALE GENOMIC DNA]</scope>
    <source>
        <strain>HS</strain>
    </source>
</reference>
<evidence type="ECO:0000255" key="1">
    <source>
        <dbReference type="HAMAP-Rule" id="MF_01345"/>
    </source>
</evidence>
<evidence type="ECO:0000305" key="2"/>
<accession>A8A5B6</accession>
<feature type="chain" id="PRO_1000067701" description="Small ribosomal subunit protein uS17">
    <location>
        <begin position="1"/>
        <end position="84"/>
    </location>
</feature>